<feature type="signal peptide" evidence="6">
    <location>
        <begin position="1"/>
        <end position="16"/>
    </location>
</feature>
<feature type="chain" id="PRO_0000274553" description="Chitinase-like protein EN03" evidence="6">
    <location>
        <begin position="17"/>
        <end position="433"/>
    </location>
</feature>
<feature type="domain" description="GH18" evidence="4">
    <location>
        <begin position="23"/>
        <end position="433"/>
    </location>
</feature>
<feature type="glycosylation site" description="N-linked (GlcNAc...) asparagine" evidence="3">
    <location>
        <position position="220"/>
    </location>
</feature>
<feature type="disulfide bond" evidence="4">
    <location>
        <begin position="27"/>
        <end position="54"/>
    </location>
</feature>
<feature type="disulfide bond" evidence="2">
    <location>
        <begin position="337"/>
        <end position="418"/>
    </location>
</feature>
<protein>
    <recommendedName>
        <fullName>Chitinase-like protein EN03</fullName>
    </recommendedName>
    <alternativeName>
        <fullName>Imaginal disk growth factor-like protein</fullName>
    </alternativeName>
</protein>
<name>IDGFL_BOMMO</name>
<evidence type="ECO:0000250" key="1"/>
<evidence type="ECO:0000250" key="2">
    <source>
        <dbReference type="UniProtKB" id="Q9V3D4"/>
    </source>
</evidence>
<evidence type="ECO:0000255" key="3"/>
<evidence type="ECO:0000255" key="4">
    <source>
        <dbReference type="PROSITE-ProRule" id="PRU01258"/>
    </source>
</evidence>
<evidence type="ECO:0000269" key="5">
    <source>
    </source>
</evidence>
<evidence type="ECO:0000269" key="6">
    <source>
    </source>
</evidence>
<evidence type="ECO:0000305" key="7"/>
<evidence type="ECO:0000312" key="8">
    <source>
        <dbReference type="EMBL" id="BAB16695.1"/>
    </source>
</evidence>
<dbReference type="EMBL" id="AB041634">
    <property type="protein sequence ID" value="BAB16695.1"/>
    <property type="molecule type" value="mRNA"/>
</dbReference>
<dbReference type="RefSeq" id="NP_001036847.1">
    <property type="nucleotide sequence ID" value="NM_001043382.1"/>
</dbReference>
<dbReference type="FunCoup" id="Q9GV28">
    <property type="interactions" value="91"/>
</dbReference>
<dbReference type="STRING" id="7091.Q9GV28"/>
<dbReference type="GlyCosmos" id="Q9GV28">
    <property type="glycosylation" value="1 site, No reported glycans"/>
</dbReference>
<dbReference type="PaxDb" id="7091-BGIBMGA000648-TA"/>
<dbReference type="EnsemblMetazoa" id="NM_001043382.1">
    <property type="protein sequence ID" value="NP_001036847.1"/>
    <property type="gene ID" value="GeneID_692387"/>
</dbReference>
<dbReference type="GeneID" id="692387"/>
<dbReference type="KEGG" id="bmor:692387"/>
<dbReference type="CTD" id="100160032"/>
<dbReference type="eggNOG" id="KOG2806">
    <property type="taxonomic scope" value="Eukaryota"/>
</dbReference>
<dbReference type="HOGENOM" id="CLU_002833_3_2_1"/>
<dbReference type="InParanoid" id="Q9GV28"/>
<dbReference type="BRENDA" id="2.4.1.16">
    <property type="organism ID" value="890"/>
</dbReference>
<dbReference type="Proteomes" id="UP000005204">
    <property type="component" value="Unassembled WGS sequence"/>
</dbReference>
<dbReference type="GO" id="GO:0005576">
    <property type="term" value="C:extracellular region"/>
    <property type="evidence" value="ECO:0007669"/>
    <property type="project" value="UniProtKB-SubCell"/>
</dbReference>
<dbReference type="GO" id="GO:0008061">
    <property type="term" value="F:chitin binding"/>
    <property type="evidence" value="ECO:0007669"/>
    <property type="project" value="InterPro"/>
</dbReference>
<dbReference type="GO" id="GO:0004568">
    <property type="term" value="F:chitinase activity"/>
    <property type="evidence" value="ECO:0007669"/>
    <property type="project" value="TreeGrafter"/>
</dbReference>
<dbReference type="GO" id="GO:0005975">
    <property type="term" value="P:carbohydrate metabolic process"/>
    <property type="evidence" value="ECO:0007669"/>
    <property type="project" value="InterPro"/>
</dbReference>
<dbReference type="GO" id="GO:0006032">
    <property type="term" value="P:chitin catabolic process"/>
    <property type="evidence" value="ECO:0007669"/>
    <property type="project" value="TreeGrafter"/>
</dbReference>
<dbReference type="CDD" id="cd02873">
    <property type="entry name" value="GH18_IDGF"/>
    <property type="match status" value="1"/>
</dbReference>
<dbReference type="FunFam" id="3.20.20.80:FF:000071">
    <property type="entry name" value="Imaginal disc growth factor"/>
    <property type="match status" value="1"/>
</dbReference>
<dbReference type="Gene3D" id="3.10.50.10">
    <property type="match status" value="1"/>
</dbReference>
<dbReference type="Gene3D" id="3.20.20.80">
    <property type="entry name" value="Glycosidases"/>
    <property type="match status" value="1"/>
</dbReference>
<dbReference type="InterPro" id="IPR011583">
    <property type="entry name" value="Chitinase_II/V-like_cat"/>
</dbReference>
<dbReference type="InterPro" id="IPR029070">
    <property type="entry name" value="Chitinase_insertion_sf"/>
</dbReference>
<dbReference type="InterPro" id="IPR001223">
    <property type="entry name" value="Glyco_hydro18_cat"/>
</dbReference>
<dbReference type="InterPro" id="IPR017853">
    <property type="entry name" value="Glycoside_hydrolase_SF"/>
</dbReference>
<dbReference type="InterPro" id="IPR050314">
    <property type="entry name" value="Glycosyl_Hydrlase_18"/>
</dbReference>
<dbReference type="InterPro" id="IPR015520">
    <property type="entry name" value="IDGF"/>
</dbReference>
<dbReference type="PANTHER" id="PTHR11177">
    <property type="entry name" value="CHITINASE"/>
    <property type="match status" value="1"/>
</dbReference>
<dbReference type="PANTHER" id="PTHR11177:SF235">
    <property type="entry name" value="CHITINASE-LIKE PROTEIN IDGF1-RELATED"/>
    <property type="match status" value="1"/>
</dbReference>
<dbReference type="Pfam" id="PF00704">
    <property type="entry name" value="Glyco_hydro_18"/>
    <property type="match status" value="1"/>
</dbReference>
<dbReference type="SMART" id="SM00636">
    <property type="entry name" value="Glyco_18"/>
    <property type="match status" value="1"/>
</dbReference>
<dbReference type="SUPFAM" id="SSF51445">
    <property type="entry name" value="(Trans)glycosidases"/>
    <property type="match status" value="1"/>
</dbReference>
<dbReference type="SUPFAM" id="SSF54556">
    <property type="entry name" value="Chitinase insertion domain"/>
    <property type="match status" value="1"/>
</dbReference>
<dbReference type="PROSITE" id="PS51910">
    <property type="entry name" value="GH18_2"/>
    <property type="match status" value="1"/>
</dbReference>
<gene>
    <name evidence="8" type="primary">EN03</name>
</gene>
<keyword id="KW-0903">Direct protein sequencing</keyword>
<keyword id="KW-1015">Disulfide bond</keyword>
<keyword id="KW-0325">Glycoprotein</keyword>
<keyword id="KW-1185">Reference proteome</keyword>
<keyword id="KW-0964">Secreted</keyword>
<keyword id="KW-0732">Signal</keyword>
<sequence length="433" mass="48144">MKLFIALVGLLALAKALPAVTHSKVLCYYDSRSYVRESQARMLPLDLDPALSFCTHLLYGYAVIQPDTYKLVSLNENLDIDRTHDNYRAITSLKAKYPGLTVLLSVGGDADTEEPEKYNLLLESQQARTAFINSGVLLAEQYGFDGIDLAWQFPRVKPKKIRSTWGSLWHGIKKTFGTTPVDEKESEHREGFTALVRELKQALIHKPKMQLGVTVLPNVNSTIYHDVPAIINLVDYVNVGAYDYYTPTRNNKEADYTAPIYTPQNRNPLQNADAAVTYWLTSGAPSQKIVLSXRLRSYLETGXDSEIAGVPPIHTDGPGEAGPYVKTEGLLSYPEVCGKLINPNQQKGMRPHLRKVTDPSKRFGTYAFRLPDDNGEGGIWVSYEDPDTAGQKAAYVKSKNLGGVAIVDLSLDDFRGLCTGDKYPILRAAKYRL</sequence>
<accession>Q9GV28</accession>
<accession>P82223</accession>
<accession>P82224</accession>
<reference evidence="7 8" key="1">
    <citation type="journal article" date="2001" name="Insect Biochem. Mol. Biol.">
        <title>Ecdysteroid-inducible genes in the programmed cell death during insect metamorphosis.</title>
        <authorList>
            <person name="Tsuzuki S."/>
            <person name="Iwami M."/>
            <person name="Sakurai S."/>
        </authorList>
    </citation>
    <scope>NUCLEOTIDE SEQUENCE [MRNA]</scope>
    <scope>INDUCTION</scope>
    <source>
        <strain evidence="5">Kinshu X Showa</strain>
        <tissue evidence="5">Anterior silk gland</tissue>
    </source>
</reference>
<reference evidence="7" key="2">
    <citation type="journal article" date="2001" name="Yi Chuan Xue Bao">
        <title>Protein database for several tissues derived from five instar of silkworm.</title>
        <authorList>
            <person name="Zhong B.-X."/>
        </authorList>
    </citation>
    <scope>PROTEIN SEQUENCE OF 17-27</scope>
    <source>
        <strain evidence="6">Xinhang X Keming</strain>
        <tissue evidence="6">Body wall</tissue>
        <tissue evidence="6">Fat body</tissue>
    </source>
</reference>
<proteinExistence type="evidence at protein level"/>
<organism>
    <name type="scientific">Bombyx mori</name>
    <name type="common">Silk moth</name>
    <dbReference type="NCBI Taxonomy" id="7091"/>
    <lineage>
        <taxon>Eukaryota</taxon>
        <taxon>Metazoa</taxon>
        <taxon>Ecdysozoa</taxon>
        <taxon>Arthropoda</taxon>
        <taxon>Hexapoda</taxon>
        <taxon>Insecta</taxon>
        <taxon>Pterygota</taxon>
        <taxon>Neoptera</taxon>
        <taxon>Endopterygota</taxon>
        <taxon>Lepidoptera</taxon>
        <taxon>Glossata</taxon>
        <taxon>Ditrysia</taxon>
        <taxon>Bombycoidea</taxon>
        <taxon>Bombycidae</taxon>
        <taxon>Bombycinae</taxon>
        <taxon>Bombyx</taxon>
    </lineage>
</organism>
<comment type="subcellular location">
    <subcellularLocation>
        <location evidence="1">Secreted</location>
    </subcellularLocation>
</comment>
<comment type="induction">
    <text evidence="5">Induced 2 to 4 hours after treatment with 20-hydroxyecdysone (20E). Repressed by 8 hours after treatment with 20E, except in the presence of cycloheximide.</text>
</comment>
<comment type="miscellaneous">
    <text evidence="5">Lacks the typical Glu active site in position 152 that is replaced by a Gln residue, preventing the hydrolase activity. Its precise function remains unclear.</text>
</comment>
<comment type="similarity">
    <text evidence="3">Belongs to the glycosyl hydrolase 18 family. IDGF subfamily.</text>
</comment>